<accession>P68118</accession>
<accession>P14468</accession>
<proteinExistence type="evidence at protein level"/>
<organism>
    <name type="scientific">Cervus elaphus</name>
    <name type="common">Red deer</name>
    <dbReference type="NCBI Taxonomy" id="9860"/>
    <lineage>
        <taxon>Eukaryota</taxon>
        <taxon>Metazoa</taxon>
        <taxon>Chordata</taxon>
        <taxon>Craniata</taxon>
        <taxon>Vertebrata</taxon>
        <taxon>Euteleostomi</taxon>
        <taxon>Mammalia</taxon>
        <taxon>Eutheria</taxon>
        <taxon>Laurasiatheria</taxon>
        <taxon>Artiodactyla</taxon>
        <taxon>Ruminantia</taxon>
        <taxon>Pecora</taxon>
        <taxon>Cervidae</taxon>
        <taxon>Cervinae</taxon>
        <taxon>Cervus</taxon>
    </lineage>
</organism>
<gene>
    <name type="primary">FGB</name>
</gene>
<dbReference type="GlyCosmos" id="P68118">
    <property type="glycosylation" value="1 site, No reported glycans"/>
</dbReference>
<dbReference type="GO" id="GO:0005576">
    <property type="term" value="C:extracellular region"/>
    <property type="evidence" value="ECO:0007669"/>
    <property type="project" value="UniProtKB-SubCell"/>
</dbReference>
<dbReference type="GO" id="GO:0002250">
    <property type="term" value="P:adaptive immune response"/>
    <property type="evidence" value="ECO:0007669"/>
    <property type="project" value="UniProtKB-KW"/>
</dbReference>
<dbReference type="GO" id="GO:0007596">
    <property type="term" value="P:blood coagulation"/>
    <property type="evidence" value="ECO:0007669"/>
    <property type="project" value="UniProtKB-KW"/>
</dbReference>
<dbReference type="GO" id="GO:0045087">
    <property type="term" value="P:innate immune response"/>
    <property type="evidence" value="ECO:0007669"/>
    <property type="project" value="UniProtKB-KW"/>
</dbReference>
<reference key="1">
    <citation type="journal article" date="1965" name="Acta Chem. Scand.">
        <title>Studies on fibrinopeptides from mammals.</title>
        <authorList>
            <person name="Blombaeck B."/>
            <person name="Blombaeck M."/>
            <person name="Grondahl N.J."/>
        </authorList>
    </citation>
    <scope>PROTEIN SEQUENCE</scope>
    <scope>PYROGLUTAMATE FORMATION AT GLN-1</scope>
    <scope>SULFATION AT TYR-6</scope>
</reference>
<feature type="peptide" id="PRO_0000009062" description="Fibrinopeptide B">
    <location>
        <begin position="1"/>
        <end position="21"/>
    </location>
</feature>
<feature type="region of interest" description="Disordered" evidence="4">
    <location>
        <begin position="1"/>
        <end position="21"/>
    </location>
</feature>
<feature type="compositionally biased region" description="Acidic residues" evidence="4">
    <location>
        <begin position="1"/>
        <end position="11"/>
    </location>
</feature>
<feature type="compositionally biased region" description="Basic and acidic residues" evidence="4">
    <location>
        <begin position="12"/>
        <end position="21"/>
    </location>
</feature>
<feature type="modified residue" description="Pyrrolidone carboxylic acid" evidence="5">
    <location>
        <position position="1"/>
    </location>
</feature>
<feature type="modified residue" description="Sulfotyrosine" evidence="5">
    <location>
        <position position="6"/>
    </location>
</feature>
<feature type="glycosylation site" description="O-linked (GalNAc...) threonine" evidence="3">
    <location>
        <position position="4"/>
    </location>
</feature>
<feature type="non-terminal residue">
    <location>
        <position position="21"/>
    </location>
</feature>
<sequence>QHSTDYDEEEEDRAKLHLDAR</sequence>
<protein>
    <recommendedName>
        <fullName>Fibrinogen beta chain</fullName>
    </recommendedName>
    <component>
        <recommendedName>
            <fullName>Fibrinopeptide B</fullName>
        </recommendedName>
    </component>
</protein>
<name>FIBB_CEREL</name>
<evidence type="ECO:0000250" key="1">
    <source>
        <dbReference type="UniProtKB" id="E9PV24"/>
    </source>
</evidence>
<evidence type="ECO:0000250" key="2">
    <source>
        <dbReference type="UniProtKB" id="P02675"/>
    </source>
</evidence>
<evidence type="ECO:0000250" key="3">
    <source>
        <dbReference type="UniProtKB" id="P02676"/>
    </source>
</evidence>
<evidence type="ECO:0000256" key="4">
    <source>
        <dbReference type="SAM" id="MobiDB-lite"/>
    </source>
</evidence>
<evidence type="ECO:0000269" key="5">
    <source ref="1"/>
</evidence>
<comment type="function">
    <text evidence="1">Cleaved by the protease thrombin to yield monomers which, together with fibrinogen alpha (FGA) and fibrinogen gamma (FGG), polymerize to form an insoluble fibrin matrix. Fibrin has a major function in hemostasis as one of the primary components of blood clots. In addition, functions during the early stages of wound repair to stabilize the lesion and guide cell migration during re-epithelialization. Was originally thought to be essential for platelet aggregation, based on in vitro studies using anticoagulated blood. However subsequent studies have shown that it is not absolutely required for thrombus formation in vivo. Enhances expression of SELP in activated platelets. Maternal fibrinogen is essential for successful pregnancy. Fibrin deposition is also associated with infection, where it protects against IFNG-mediated hemorrhage. May also facilitate the antibacterial immune response via both innate and T-cell mediated pathways.</text>
</comment>
<comment type="subunit">
    <text evidence="2">Heterohexamer; disulfide linked. Contains 2 sets of 3 non-identical chains (alpha, beta and gamma). The 2 heterotrimers are in head to head conformation with the N-termini in a small central domain (By similarity).</text>
</comment>
<comment type="subcellular location">
    <subcellularLocation>
        <location>Secreted</location>
    </subcellularLocation>
</comment>
<comment type="domain">
    <text evidence="2">A long coiled coil structure formed by 3 polypeptide chains connects the central nodule to the C-terminal domains (distal nodules). The long C-terminal ends of the alpha chains fold back, contributing a fourth strand to the coiled coil structure.</text>
</comment>
<comment type="PTM">
    <text>Conversion of fibrinogen to fibrin is triggered by thrombin, which cleaves fibrinopeptides A and B from alpha and beta chains, and thus exposes the N-terminal polymerization sites responsible for the formation of the soft clot.</text>
</comment>
<keyword id="KW-1064">Adaptive immunity</keyword>
<keyword id="KW-0094">Blood coagulation</keyword>
<keyword id="KW-0175">Coiled coil</keyword>
<keyword id="KW-0903">Direct protein sequencing</keyword>
<keyword id="KW-1015">Disulfide bond</keyword>
<keyword id="KW-0325">Glycoprotein</keyword>
<keyword id="KW-0356">Hemostasis</keyword>
<keyword id="KW-0391">Immunity</keyword>
<keyword id="KW-0399">Innate immunity</keyword>
<keyword id="KW-0873">Pyrrolidone carboxylic acid</keyword>
<keyword id="KW-0964">Secreted</keyword>
<keyword id="KW-0765">Sulfation</keyword>